<name>GL18B_MDBVW</name>
<proteinExistence type="inferred from homology"/>
<comment type="function">
    <text evidence="1">Involved in suppression of the insect cellular immune response. Inhibits host hemocyte adhesion and phagocytosis (By similarity).</text>
</comment>
<comment type="subcellular location">
    <subcellularLocation>
        <location evidence="4">Host membrane</location>
        <topology evidence="4">Single-pass membrane protein</topology>
    </subcellularLocation>
</comment>
<comment type="similarity">
    <text evidence="4">Belongs to the polydnaviridae Glc1.8 protein family.</text>
</comment>
<gene>
    <name type="primary">O16</name>
</gene>
<feature type="signal peptide" evidence="2">
    <location>
        <begin position="1"/>
        <end position="20"/>
    </location>
</feature>
<feature type="chain" id="PRO_0000405392" description="Mucin-like protein Glc1.8b">
    <location>
        <begin position="21"/>
        <end position="515"/>
    </location>
</feature>
<feature type="topological domain" description="Extracellular" evidence="2">
    <location>
        <begin position="21"/>
        <end position="467"/>
    </location>
</feature>
<feature type="transmembrane region" description="Helical" evidence="2">
    <location>
        <begin position="468"/>
        <end position="488"/>
    </location>
</feature>
<feature type="topological domain" description="Cytoplasmic" evidence="2">
    <location>
        <begin position="489"/>
        <end position="515"/>
    </location>
</feature>
<feature type="region of interest" description="Disordered" evidence="3">
    <location>
        <begin position="80"/>
        <end position="114"/>
    </location>
</feature>
<feature type="region of interest" description="Disordered" evidence="3">
    <location>
        <begin position="314"/>
        <end position="358"/>
    </location>
</feature>
<feature type="region of interest" description="Disordered" evidence="3">
    <location>
        <begin position="393"/>
        <end position="413"/>
    </location>
</feature>
<feature type="compositionally biased region" description="Polar residues" evidence="3">
    <location>
        <begin position="86"/>
        <end position="104"/>
    </location>
</feature>
<feature type="compositionally biased region" description="Polar residues" evidence="3">
    <location>
        <begin position="320"/>
        <end position="338"/>
    </location>
</feature>
<feature type="glycosylation site" description="N-linked (GlcNAc...) asparagine; by host" evidence="2">
    <location>
        <position position="24"/>
    </location>
</feature>
<feature type="glycosylation site" description="N-linked (GlcNAc...) asparagine; by host" evidence="2">
    <location>
        <position position="45"/>
    </location>
</feature>
<feature type="glycosylation site" description="N-linked (GlcNAc...) asparagine; by host" evidence="2">
    <location>
        <position position="51"/>
    </location>
</feature>
<feature type="glycosylation site" description="N-linked (GlcNAc...) asparagine; by host" evidence="2">
    <location>
        <position position="60"/>
    </location>
</feature>
<feature type="glycosylation site" description="N-linked (GlcNAc...) asparagine; by host" evidence="2">
    <location>
        <position position="85"/>
    </location>
</feature>
<feature type="glycosylation site" description="N-linked (GlcNAc...) asparagine; by host" evidence="2">
    <location>
        <position position="93"/>
    </location>
</feature>
<feature type="glycosylation site" description="N-linked (GlcNAc...) asparagine; by host" evidence="2">
    <location>
        <position position="102"/>
    </location>
</feature>
<feature type="glycosylation site" description="N-linked (GlcNAc...) asparagine; by host" evidence="2">
    <location>
        <position position="123"/>
    </location>
</feature>
<feature type="glycosylation site" description="N-linked (GlcNAc...) asparagine; by host" evidence="2">
    <location>
        <position position="129"/>
    </location>
</feature>
<feature type="glycosylation site" description="N-linked (GlcNAc...) asparagine; by host" evidence="2">
    <location>
        <position position="138"/>
    </location>
</feature>
<feature type="glycosylation site" description="N-linked (GlcNAc...) asparagine; by host" evidence="2">
    <location>
        <position position="180"/>
    </location>
</feature>
<feature type="glycosylation site" description="N-linked (GlcNAc...) asparagine; by host" evidence="2">
    <location>
        <position position="201"/>
    </location>
</feature>
<feature type="glycosylation site" description="N-linked (GlcNAc...) asparagine; by host" evidence="2">
    <location>
        <position position="207"/>
    </location>
</feature>
<feature type="glycosylation site" description="N-linked (GlcNAc...) asparagine; by host" evidence="2">
    <location>
        <position position="216"/>
    </location>
</feature>
<feature type="glycosylation site" description="N-linked (GlcNAc...) asparagine; by host" evidence="2">
    <location>
        <position position="258"/>
    </location>
</feature>
<feature type="glycosylation site" description="N-linked (GlcNAc...) asparagine; by host" evidence="2">
    <location>
        <position position="279"/>
    </location>
</feature>
<feature type="glycosylation site" description="N-linked (GlcNAc...) asparagine; by host" evidence="2">
    <location>
        <position position="285"/>
    </location>
</feature>
<feature type="glycosylation site" description="N-linked (GlcNAc...) asparagine; by host" evidence="2">
    <location>
        <position position="294"/>
    </location>
</feature>
<feature type="glycosylation site" description="N-linked (GlcNAc...) asparagine; by host" evidence="2">
    <location>
        <position position="319"/>
    </location>
</feature>
<feature type="glycosylation site" description="N-linked (GlcNAc...) asparagine; by host" evidence="2">
    <location>
        <position position="327"/>
    </location>
</feature>
<feature type="glycosylation site" description="N-linked (GlcNAc...) asparagine; by host" evidence="2">
    <location>
        <position position="336"/>
    </location>
</feature>
<feature type="glycosylation site" description="N-linked (GlcNAc...) asparagine; by host" evidence="2">
    <location>
        <position position="357"/>
    </location>
</feature>
<feature type="glycosylation site" description="N-linked (GlcNAc...) asparagine; by host" evidence="2">
    <location>
        <position position="363"/>
    </location>
</feature>
<feature type="glycosylation site" description="N-linked (GlcNAc...) asparagine; by host" evidence="2">
    <location>
        <position position="372"/>
    </location>
</feature>
<feature type="glycosylation site" description="N-linked (GlcNAc...) asparagine; by host" evidence="2">
    <location>
        <position position="397"/>
    </location>
</feature>
<feature type="glycosylation site" description="N-linked (GlcNAc...) asparagine; by host" evidence="2">
    <location>
        <position position="405"/>
    </location>
</feature>
<feature type="glycosylation site" description="N-linked (GlcNAc...) asparagine; by host" evidence="2">
    <location>
        <position position="413"/>
    </location>
</feature>
<feature type="glycosylation site" description="N-linked (GlcNAc...) asparagine; by host" evidence="2">
    <location>
        <position position="434"/>
    </location>
</feature>
<feature type="glycosylation site" description="N-linked (GlcNAc...) asparagine; by host" evidence="2">
    <location>
        <position position="441"/>
    </location>
</feature>
<protein>
    <recommendedName>
        <fullName>Mucin-like protein Glc1.8b</fullName>
        <shortName>Glc1.8b</shortName>
    </recommendedName>
</protein>
<sequence length="515" mass="56239">MSQITLIILVLAIGFSCTKSHPINSTRDGEDSGTDLKNLLTEPANTTYATNSTLTRKELNSTIQPERNDEGSAIRKIMASKKDENITGQSEINTSAKSQPINSTRDGEDSGTDLKNLLTEPANTTYATNSTLTRKELNSSIPPERNDEGSAIRKIMASKKDEIITGQSEINTIAKSQPINSTRDGEDSGTDLKNLLTEPANTTYATNSTLTRKELNSSIPPERNDEGSAIRKIMASKKDEIITGQSEINTIAKSQPINSTRDGEDSGTDLKNLLTELANTTYLTNSTLTRKELNSTIQPERNDEGSAIRKIMASKKDENITGQSEINTSAKSQPINSTRDGEDSGTDLKNLLTDPANTTYATNSTLTRKELNSTIQPERNDETSAIRKIMASRKDENVTGQSEFNISTNSNLNTTTHHEDAVVSPTEKVYVPNNASSAELNVSSTIQPKEADVTTSSANDIKKPAFPYCIILITFQIVTVGMIIYLVFRTMRKPCQSERAIPLNSFGFGNNSSYE</sequence>
<accession>Q4ZJY7</accession>
<keyword id="KW-0325">Glycoprotein</keyword>
<keyword id="KW-1043">Host membrane</keyword>
<keyword id="KW-0945">Host-virus interaction</keyword>
<keyword id="KW-1090">Inhibition of host innate immune response by virus</keyword>
<keyword id="KW-0472">Membrane</keyword>
<keyword id="KW-1185">Reference proteome</keyword>
<keyword id="KW-0732">Signal</keyword>
<keyword id="KW-0812">Transmembrane</keyword>
<keyword id="KW-1133">Transmembrane helix</keyword>
<keyword id="KW-0899">Viral immunoevasion</keyword>
<dbReference type="EMBL" id="DQ000240">
    <property type="protein sequence ID" value="AAY24531.1"/>
    <property type="molecule type" value="Genomic_DNA"/>
</dbReference>
<dbReference type="GlyCosmos" id="Q4ZJY7">
    <property type="glycosylation" value="29 sites, No reported glycans"/>
</dbReference>
<dbReference type="KEGG" id="vg:3416074"/>
<dbReference type="Proteomes" id="UP000008168">
    <property type="component" value="Genome"/>
</dbReference>
<dbReference type="GO" id="GO:0033644">
    <property type="term" value="C:host cell membrane"/>
    <property type="evidence" value="ECO:0007669"/>
    <property type="project" value="UniProtKB-SubCell"/>
</dbReference>
<dbReference type="GO" id="GO:0016020">
    <property type="term" value="C:membrane"/>
    <property type="evidence" value="ECO:0007669"/>
    <property type="project" value="UniProtKB-KW"/>
</dbReference>
<dbReference type="GO" id="GO:0052170">
    <property type="term" value="P:symbiont-mediated suppression of host innate immune response"/>
    <property type="evidence" value="ECO:0007669"/>
    <property type="project" value="UniProtKB-KW"/>
</dbReference>
<reference key="1">
    <citation type="journal article" date="2006" name="Virology">
        <title>Polydnavirus genomes reflect their dual roles as mutualists and pathogens.</title>
        <authorList>
            <person name="Webb B.A."/>
            <person name="Strand M.R."/>
            <person name="Dickey S.E."/>
            <person name="Beck M.H."/>
            <person name="Hilgarth R.S."/>
            <person name="Barney W.E."/>
            <person name="Kadash K."/>
            <person name="Kroemer J.A."/>
            <person name="Lindstrom K.G."/>
            <person name="Rattanadechakul W."/>
            <person name="Shelby K.S."/>
            <person name="Thoetkiattikul H."/>
            <person name="Turnbull M.W."/>
            <person name="Witherell R.A."/>
        </authorList>
    </citation>
    <scope>NUCLEOTIDE SEQUENCE [GENOMIC DNA]</scope>
</reference>
<organismHost>
    <name type="scientific">Microplitis demolitor</name>
    <name type="common">Parasitoid wasp</name>
    <dbReference type="NCBI Taxonomy" id="69319"/>
</organismHost>
<evidence type="ECO:0000250" key="1"/>
<evidence type="ECO:0000255" key="2"/>
<evidence type="ECO:0000256" key="3">
    <source>
        <dbReference type="SAM" id="MobiDB-lite"/>
    </source>
</evidence>
<evidence type="ECO:0000305" key="4"/>
<organism>
    <name type="scientific">Microplitis demolitor bracovirus (isolate Webb)</name>
    <name type="common">MdBV</name>
    <dbReference type="NCBI Taxonomy" id="654919"/>
    <lineage>
        <taxon>Viruses</taxon>
        <taxon>Viruses incertae sedis</taxon>
        <taxon>Polydnaviriformidae</taxon>
        <taxon>Bracoviriform</taxon>
        <taxon>Microplitis demolitor bracovirus</taxon>
    </lineage>
</organism>